<reference key="1">
    <citation type="journal article" date="2010" name="Appl. Environ. Microbiol.">
        <title>The genome sequence of Psychrobacter arcticus 273-4, a psychroactive Siberian permafrost bacterium, reveals mechanisms for adaptation to low-temperature growth.</title>
        <authorList>
            <person name="Ayala-del-Rio H.L."/>
            <person name="Chain P.S."/>
            <person name="Grzymski J.J."/>
            <person name="Ponder M.A."/>
            <person name="Ivanova N."/>
            <person name="Bergholz P.W."/>
            <person name="Di Bartolo G."/>
            <person name="Hauser L."/>
            <person name="Land M."/>
            <person name="Bakermans C."/>
            <person name="Rodrigues D."/>
            <person name="Klappenbach J."/>
            <person name="Zarka D."/>
            <person name="Larimer F."/>
            <person name="Richardson P."/>
            <person name="Murray A."/>
            <person name="Thomashow M."/>
            <person name="Tiedje J.M."/>
        </authorList>
    </citation>
    <scope>NUCLEOTIDE SEQUENCE [LARGE SCALE GENOMIC DNA]</scope>
    <source>
        <strain>DSM 17307 / VKM B-2377 / 273-4</strain>
    </source>
</reference>
<keyword id="KW-0131">Cell cycle</keyword>
<keyword id="KW-0132">Cell division</keyword>
<keyword id="KW-0133">Cell shape</keyword>
<keyword id="KW-0961">Cell wall biogenesis/degradation</keyword>
<keyword id="KW-0963">Cytoplasm</keyword>
<keyword id="KW-0274">FAD</keyword>
<keyword id="KW-0285">Flavoprotein</keyword>
<keyword id="KW-0521">NADP</keyword>
<keyword id="KW-0560">Oxidoreductase</keyword>
<keyword id="KW-0573">Peptidoglycan synthesis</keyword>
<keyword id="KW-1185">Reference proteome</keyword>
<proteinExistence type="inferred from homology"/>
<sequence length="373" mass="40984">MTSALCSKSTAPHTLSDDVADLSHSNTMALACTANSVVTLKNEAQLDEFMANYGQDTQYSQPLFVLSGGSNVLLPAKLNAIVLRPQMRGIQVTSQTDSHVDIEVMAGENWHDLVLHTVAQGWYGLENLALIPGLTGAAPIQNIGAYGVQLEDCLQYVRAYHFPSQTWHDLTAVDCEFGYRDSIFKRQPNTWLISRVGFRLHTDATKVLASYGDVQTVAQGYAMKQSRTKPTPADVMHAIIDIRQQKLPDPKQLPNCGSFFQNPIIPQDQFTALQSSYPAIVGYPMPDAMIKVAAGWLIEQAGLKGGGIEPIVTHQQQALVLTNHTPYQATQKEVAAAQQYITDTVYERFAIPLSREPVWVNADGSIGYDKHVV</sequence>
<comment type="function">
    <text evidence="1">Cell wall formation.</text>
</comment>
<comment type="catalytic activity">
    <reaction evidence="1">
        <text>UDP-N-acetyl-alpha-D-muramate + NADP(+) = UDP-N-acetyl-3-O-(1-carboxyvinyl)-alpha-D-glucosamine + NADPH + H(+)</text>
        <dbReference type="Rhea" id="RHEA:12248"/>
        <dbReference type="ChEBI" id="CHEBI:15378"/>
        <dbReference type="ChEBI" id="CHEBI:57783"/>
        <dbReference type="ChEBI" id="CHEBI:58349"/>
        <dbReference type="ChEBI" id="CHEBI:68483"/>
        <dbReference type="ChEBI" id="CHEBI:70757"/>
        <dbReference type="EC" id="1.3.1.98"/>
    </reaction>
</comment>
<comment type="cofactor">
    <cofactor evidence="1">
        <name>FAD</name>
        <dbReference type="ChEBI" id="CHEBI:57692"/>
    </cofactor>
</comment>
<comment type="pathway">
    <text evidence="1">Cell wall biogenesis; peptidoglycan biosynthesis.</text>
</comment>
<comment type="subcellular location">
    <subcellularLocation>
        <location evidence="1">Cytoplasm</location>
    </subcellularLocation>
</comment>
<comment type="similarity">
    <text evidence="1">Belongs to the MurB family.</text>
</comment>
<protein>
    <recommendedName>
        <fullName evidence="1">UDP-N-acetylenolpyruvoylglucosamine reductase</fullName>
        <ecNumber evidence="1">1.3.1.98</ecNumber>
    </recommendedName>
    <alternativeName>
        <fullName evidence="1">UDP-N-acetylmuramate dehydrogenase</fullName>
    </alternativeName>
</protein>
<gene>
    <name evidence="1" type="primary">murB</name>
    <name type="ordered locus">Psyc_0948</name>
</gene>
<feature type="chain" id="PRO_0000224711" description="UDP-N-acetylenolpyruvoylglucosamine reductase">
    <location>
        <begin position="1"/>
        <end position="373"/>
    </location>
</feature>
<feature type="domain" description="FAD-binding PCMH-type" evidence="1">
    <location>
        <begin position="30"/>
        <end position="203"/>
    </location>
</feature>
<feature type="active site" evidence="1">
    <location>
        <position position="180"/>
    </location>
</feature>
<feature type="active site" description="Proton donor" evidence="1">
    <location>
        <position position="258"/>
    </location>
</feature>
<feature type="active site" evidence="1">
    <location>
        <position position="356"/>
    </location>
</feature>
<dbReference type="EC" id="1.3.1.98" evidence="1"/>
<dbReference type="EMBL" id="CP000082">
    <property type="protein sequence ID" value="AAZ18801.1"/>
    <property type="molecule type" value="Genomic_DNA"/>
</dbReference>
<dbReference type="RefSeq" id="WP_011280223.1">
    <property type="nucleotide sequence ID" value="NC_007204.1"/>
</dbReference>
<dbReference type="SMR" id="Q4FT57"/>
<dbReference type="STRING" id="259536.Psyc_0948"/>
<dbReference type="KEGG" id="par:Psyc_0948"/>
<dbReference type="eggNOG" id="COG0812">
    <property type="taxonomic scope" value="Bacteria"/>
</dbReference>
<dbReference type="HOGENOM" id="CLU_035304_0_0_6"/>
<dbReference type="OrthoDB" id="9804753at2"/>
<dbReference type="UniPathway" id="UPA00219"/>
<dbReference type="Proteomes" id="UP000000546">
    <property type="component" value="Chromosome"/>
</dbReference>
<dbReference type="GO" id="GO:0005829">
    <property type="term" value="C:cytosol"/>
    <property type="evidence" value="ECO:0007669"/>
    <property type="project" value="TreeGrafter"/>
</dbReference>
<dbReference type="GO" id="GO:0071949">
    <property type="term" value="F:FAD binding"/>
    <property type="evidence" value="ECO:0007669"/>
    <property type="project" value="InterPro"/>
</dbReference>
<dbReference type="GO" id="GO:0008762">
    <property type="term" value="F:UDP-N-acetylmuramate dehydrogenase activity"/>
    <property type="evidence" value="ECO:0007669"/>
    <property type="project" value="UniProtKB-UniRule"/>
</dbReference>
<dbReference type="GO" id="GO:0051301">
    <property type="term" value="P:cell division"/>
    <property type="evidence" value="ECO:0007669"/>
    <property type="project" value="UniProtKB-KW"/>
</dbReference>
<dbReference type="GO" id="GO:0071555">
    <property type="term" value="P:cell wall organization"/>
    <property type="evidence" value="ECO:0007669"/>
    <property type="project" value="UniProtKB-KW"/>
</dbReference>
<dbReference type="GO" id="GO:0009252">
    <property type="term" value="P:peptidoglycan biosynthetic process"/>
    <property type="evidence" value="ECO:0007669"/>
    <property type="project" value="UniProtKB-UniRule"/>
</dbReference>
<dbReference type="GO" id="GO:0008360">
    <property type="term" value="P:regulation of cell shape"/>
    <property type="evidence" value="ECO:0007669"/>
    <property type="project" value="UniProtKB-KW"/>
</dbReference>
<dbReference type="Gene3D" id="3.30.465.10">
    <property type="match status" value="1"/>
</dbReference>
<dbReference type="Gene3D" id="3.90.78.10">
    <property type="entry name" value="UDP-N-acetylenolpyruvoylglucosamine reductase, C-terminal domain"/>
    <property type="match status" value="1"/>
</dbReference>
<dbReference type="Gene3D" id="3.30.43.10">
    <property type="entry name" value="Uridine Diphospho-n-acetylenolpyruvylglucosamine Reductase, domain 2"/>
    <property type="match status" value="1"/>
</dbReference>
<dbReference type="HAMAP" id="MF_00037">
    <property type="entry name" value="MurB"/>
    <property type="match status" value="1"/>
</dbReference>
<dbReference type="InterPro" id="IPR016166">
    <property type="entry name" value="FAD-bd_PCMH"/>
</dbReference>
<dbReference type="InterPro" id="IPR036318">
    <property type="entry name" value="FAD-bd_PCMH-like_sf"/>
</dbReference>
<dbReference type="InterPro" id="IPR016167">
    <property type="entry name" value="FAD-bd_PCMH_sub1"/>
</dbReference>
<dbReference type="InterPro" id="IPR016169">
    <property type="entry name" value="FAD-bd_PCMH_sub2"/>
</dbReference>
<dbReference type="InterPro" id="IPR003170">
    <property type="entry name" value="MurB"/>
</dbReference>
<dbReference type="InterPro" id="IPR011601">
    <property type="entry name" value="MurB_C"/>
</dbReference>
<dbReference type="InterPro" id="IPR036635">
    <property type="entry name" value="MurB_C_sf"/>
</dbReference>
<dbReference type="InterPro" id="IPR006094">
    <property type="entry name" value="Oxid_FAD_bind_N"/>
</dbReference>
<dbReference type="NCBIfam" id="TIGR00179">
    <property type="entry name" value="murB"/>
    <property type="match status" value="1"/>
</dbReference>
<dbReference type="NCBIfam" id="NF000755">
    <property type="entry name" value="PRK00046.1"/>
    <property type="match status" value="1"/>
</dbReference>
<dbReference type="PANTHER" id="PTHR21071">
    <property type="entry name" value="UDP-N-ACETYLENOLPYRUVOYLGLUCOSAMINE REDUCTASE"/>
    <property type="match status" value="1"/>
</dbReference>
<dbReference type="PANTHER" id="PTHR21071:SF4">
    <property type="entry name" value="UDP-N-ACETYLENOLPYRUVOYLGLUCOSAMINE REDUCTASE"/>
    <property type="match status" value="1"/>
</dbReference>
<dbReference type="Pfam" id="PF01565">
    <property type="entry name" value="FAD_binding_4"/>
    <property type="match status" value="1"/>
</dbReference>
<dbReference type="Pfam" id="PF02873">
    <property type="entry name" value="MurB_C"/>
    <property type="match status" value="1"/>
</dbReference>
<dbReference type="SUPFAM" id="SSF56176">
    <property type="entry name" value="FAD-binding/transporter-associated domain-like"/>
    <property type="match status" value="1"/>
</dbReference>
<dbReference type="SUPFAM" id="SSF56194">
    <property type="entry name" value="Uridine diphospho-N-Acetylenolpyruvylglucosamine reductase, MurB, C-terminal domain"/>
    <property type="match status" value="1"/>
</dbReference>
<dbReference type="PROSITE" id="PS51387">
    <property type="entry name" value="FAD_PCMH"/>
    <property type="match status" value="1"/>
</dbReference>
<accession>Q4FT57</accession>
<evidence type="ECO:0000255" key="1">
    <source>
        <dbReference type="HAMAP-Rule" id="MF_00037"/>
    </source>
</evidence>
<organism>
    <name type="scientific">Psychrobacter arcticus (strain DSM 17307 / VKM B-2377 / 273-4)</name>
    <dbReference type="NCBI Taxonomy" id="259536"/>
    <lineage>
        <taxon>Bacteria</taxon>
        <taxon>Pseudomonadati</taxon>
        <taxon>Pseudomonadota</taxon>
        <taxon>Gammaproteobacteria</taxon>
        <taxon>Moraxellales</taxon>
        <taxon>Moraxellaceae</taxon>
        <taxon>Psychrobacter</taxon>
    </lineage>
</organism>
<name>MURB_PSYA2</name>